<gene>
    <name evidence="1" type="primary">rnc</name>
    <name type="ordered locus">OEOE_0453</name>
</gene>
<sequence>MNNIQKGIKEDFGIEFANQDLLLEAFTQGNYLNEHPEEKGRDYQRLEFLGDSVMQLIVADYLFTRYPAWEEGQLTEMRIAMVQSKSFSHFARLAGFNRYIRLGKGEELSGARNRDSLLEDIWEAFIGALYKDQGAKAVFTFLNKAFFPAIDEGFFEEFIDYKSKLQELLQKAGSVDIEYKVENEDLSDPQKPHFEVTVFVNDKAIGSGSGRSIKIAEKRAAKKAYQDVTPR</sequence>
<proteinExistence type="inferred from homology"/>
<reference key="1">
    <citation type="journal article" date="2006" name="Proc. Natl. Acad. Sci. U.S.A.">
        <title>Comparative genomics of the lactic acid bacteria.</title>
        <authorList>
            <person name="Makarova K.S."/>
            <person name="Slesarev A."/>
            <person name="Wolf Y.I."/>
            <person name="Sorokin A."/>
            <person name="Mirkin B."/>
            <person name="Koonin E.V."/>
            <person name="Pavlov A."/>
            <person name="Pavlova N."/>
            <person name="Karamychev V."/>
            <person name="Polouchine N."/>
            <person name="Shakhova V."/>
            <person name="Grigoriev I."/>
            <person name="Lou Y."/>
            <person name="Rohksar D."/>
            <person name="Lucas S."/>
            <person name="Huang K."/>
            <person name="Goodstein D.M."/>
            <person name="Hawkins T."/>
            <person name="Plengvidhya V."/>
            <person name="Welker D."/>
            <person name="Hughes J."/>
            <person name="Goh Y."/>
            <person name="Benson A."/>
            <person name="Baldwin K."/>
            <person name="Lee J.-H."/>
            <person name="Diaz-Muniz I."/>
            <person name="Dosti B."/>
            <person name="Smeianov V."/>
            <person name="Wechter W."/>
            <person name="Barabote R."/>
            <person name="Lorca G."/>
            <person name="Altermann E."/>
            <person name="Barrangou R."/>
            <person name="Ganesan B."/>
            <person name="Xie Y."/>
            <person name="Rawsthorne H."/>
            <person name="Tamir D."/>
            <person name="Parker C."/>
            <person name="Breidt F."/>
            <person name="Broadbent J.R."/>
            <person name="Hutkins R."/>
            <person name="O'Sullivan D."/>
            <person name="Steele J."/>
            <person name="Unlu G."/>
            <person name="Saier M.H. Jr."/>
            <person name="Klaenhammer T."/>
            <person name="Richardson P."/>
            <person name="Kozyavkin S."/>
            <person name="Weimer B.C."/>
            <person name="Mills D.A."/>
        </authorList>
    </citation>
    <scope>NUCLEOTIDE SEQUENCE [LARGE SCALE GENOMIC DNA]</scope>
    <source>
        <strain>ATCC BAA-331 / PSU-1</strain>
    </source>
</reference>
<keyword id="KW-0963">Cytoplasm</keyword>
<keyword id="KW-0255">Endonuclease</keyword>
<keyword id="KW-0378">Hydrolase</keyword>
<keyword id="KW-0460">Magnesium</keyword>
<keyword id="KW-0479">Metal-binding</keyword>
<keyword id="KW-0507">mRNA processing</keyword>
<keyword id="KW-0540">Nuclease</keyword>
<keyword id="KW-1185">Reference proteome</keyword>
<keyword id="KW-0694">RNA-binding</keyword>
<keyword id="KW-0698">rRNA processing</keyword>
<keyword id="KW-0699">rRNA-binding</keyword>
<keyword id="KW-0819">tRNA processing</keyword>
<comment type="function">
    <text evidence="1">Digests double-stranded RNA. Involved in the processing of primary rRNA transcript to yield the immediate precursors to the large and small rRNAs (23S and 16S). Processes some mRNAs, and tRNAs when they are encoded in the rRNA operon. Processes pre-crRNA and tracrRNA of type II CRISPR loci if present in the organism.</text>
</comment>
<comment type="catalytic activity">
    <reaction evidence="1">
        <text>Endonucleolytic cleavage to 5'-phosphomonoester.</text>
        <dbReference type="EC" id="3.1.26.3"/>
    </reaction>
</comment>
<comment type="cofactor">
    <cofactor evidence="1">
        <name>Mg(2+)</name>
        <dbReference type="ChEBI" id="CHEBI:18420"/>
    </cofactor>
</comment>
<comment type="subunit">
    <text evidence="1">Homodimer.</text>
</comment>
<comment type="subcellular location">
    <subcellularLocation>
        <location evidence="1">Cytoplasm</location>
    </subcellularLocation>
</comment>
<comment type="similarity">
    <text evidence="1">Belongs to the ribonuclease III family.</text>
</comment>
<name>RNC_OENOB</name>
<dbReference type="EC" id="3.1.26.3" evidence="1"/>
<dbReference type="EMBL" id="CP000411">
    <property type="protein sequence ID" value="ABJ56410.1"/>
    <property type="molecule type" value="Genomic_DNA"/>
</dbReference>
<dbReference type="RefSeq" id="WP_002818249.1">
    <property type="nucleotide sequence ID" value="NC_008528.1"/>
</dbReference>
<dbReference type="SMR" id="Q04GL2"/>
<dbReference type="STRING" id="203123.OEOE_0453"/>
<dbReference type="GeneID" id="75065246"/>
<dbReference type="KEGG" id="ooe:OEOE_0453"/>
<dbReference type="eggNOG" id="COG0571">
    <property type="taxonomic scope" value="Bacteria"/>
</dbReference>
<dbReference type="HOGENOM" id="CLU_000907_1_3_9"/>
<dbReference type="Proteomes" id="UP000000774">
    <property type="component" value="Chromosome"/>
</dbReference>
<dbReference type="GO" id="GO:0005737">
    <property type="term" value="C:cytoplasm"/>
    <property type="evidence" value="ECO:0007669"/>
    <property type="project" value="UniProtKB-SubCell"/>
</dbReference>
<dbReference type="GO" id="GO:0003725">
    <property type="term" value="F:double-stranded RNA binding"/>
    <property type="evidence" value="ECO:0007669"/>
    <property type="project" value="TreeGrafter"/>
</dbReference>
<dbReference type="GO" id="GO:0046872">
    <property type="term" value="F:metal ion binding"/>
    <property type="evidence" value="ECO:0007669"/>
    <property type="project" value="UniProtKB-KW"/>
</dbReference>
<dbReference type="GO" id="GO:0004525">
    <property type="term" value="F:ribonuclease III activity"/>
    <property type="evidence" value="ECO:0007669"/>
    <property type="project" value="UniProtKB-UniRule"/>
</dbReference>
<dbReference type="GO" id="GO:0019843">
    <property type="term" value="F:rRNA binding"/>
    <property type="evidence" value="ECO:0007669"/>
    <property type="project" value="UniProtKB-KW"/>
</dbReference>
<dbReference type="GO" id="GO:0006397">
    <property type="term" value="P:mRNA processing"/>
    <property type="evidence" value="ECO:0007669"/>
    <property type="project" value="UniProtKB-UniRule"/>
</dbReference>
<dbReference type="GO" id="GO:0010468">
    <property type="term" value="P:regulation of gene expression"/>
    <property type="evidence" value="ECO:0007669"/>
    <property type="project" value="TreeGrafter"/>
</dbReference>
<dbReference type="GO" id="GO:0006364">
    <property type="term" value="P:rRNA processing"/>
    <property type="evidence" value="ECO:0007669"/>
    <property type="project" value="UniProtKB-UniRule"/>
</dbReference>
<dbReference type="GO" id="GO:0008033">
    <property type="term" value="P:tRNA processing"/>
    <property type="evidence" value="ECO:0007669"/>
    <property type="project" value="UniProtKB-KW"/>
</dbReference>
<dbReference type="CDD" id="cd10845">
    <property type="entry name" value="DSRM_RNAse_III_family"/>
    <property type="match status" value="1"/>
</dbReference>
<dbReference type="CDD" id="cd00593">
    <property type="entry name" value="RIBOc"/>
    <property type="match status" value="1"/>
</dbReference>
<dbReference type="FunFam" id="1.10.1520.10:FF:000001">
    <property type="entry name" value="Ribonuclease 3"/>
    <property type="match status" value="1"/>
</dbReference>
<dbReference type="Gene3D" id="3.30.160.20">
    <property type="match status" value="1"/>
</dbReference>
<dbReference type="Gene3D" id="1.10.1520.10">
    <property type="entry name" value="Ribonuclease III domain"/>
    <property type="match status" value="1"/>
</dbReference>
<dbReference type="HAMAP" id="MF_00104">
    <property type="entry name" value="RNase_III"/>
    <property type="match status" value="1"/>
</dbReference>
<dbReference type="InterPro" id="IPR014720">
    <property type="entry name" value="dsRBD_dom"/>
</dbReference>
<dbReference type="InterPro" id="IPR011907">
    <property type="entry name" value="RNase_III"/>
</dbReference>
<dbReference type="InterPro" id="IPR000999">
    <property type="entry name" value="RNase_III_dom"/>
</dbReference>
<dbReference type="InterPro" id="IPR036389">
    <property type="entry name" value="RNase_III_sf"/>
</dbReference>
<dbReference type="NCBIfam" id="TIGR02191">
    <property type="entry name" value="RNaseIII"/>
    <property type="match status" value="1"/>
</dbReference>
<dbReference type="PANTHER" id="PTHR11207:SF0">
    <property type="entry name" value="RIBONUCLEASE 3"/>
    <property type="match status" value="1"/>
</dbReference>
<dbReference type="PANTHER" id="PTHR11207">
    <property type="entry name" value="RIBONUCLEASE III"/>
    <property type="match status" value="1"/>
</dbReference>
<dbReference type="Pfam" id="PF00035">
    <property type="entry name" value="dsrm"/>
    <property type="match status" value="1"/>
</dbReference>
<dbReference type="Pfam" id="PF14622">
    <property type="entry name" value="Ribonucleas_3_3"/>
    <property type="match status" value="1"/>
</dbReference>
<dbReference type="SMART" id="SM00358">
    <property type="entry name" value="DSRM"/>
    <property type="match status" value="1"/>
</dbReference>
<dbReference type="SMART" id="SM00535">
    <property type="entry name" value="RIBOc"/>
    <property type="match status" value="1"/>
</dbReference>
<dbReference type="SUPFAM" id="SSF54768">
    <property type="entry name" value="dsRNA-binding domain-like"/>
    <property type="match status" value="1"/>
</dbReference>
<dbReference type="SUPFAM" id="SSF69065">
    <property type="entry name" value="RNase III domain-like"/>
    <property type="match status" value="1"/>
</dbReference>
<dbReference type="PROSITE" id="PS50137">
    <property type="entry name" value="DS_RBD"/>
    <property type="match status" value="1"/>
</dbReference>
<dbReference type="PROSITE" id="PS00517">
    <property type="entry name" value="RNASE_3_1"/>
    <property type="match status" value="1"/>
</dbReference>
<dbReference type="PROSITE" id="PS50142">
    <property type="entry name" value="RNASE_3_2"/>
    <property type="match status" value="1"/>
</dbReference>
<feature type="chain" id="PRO_1000075783" description="Ribonuclease 3">
    <location>
        <begin position="1"/>
        <end position="231"/>
    </location>
</feature>
<feature type="domain" description="RNase III" evidence="1">
    <location>
        <begin position="5"/>
        <end position="134"/>
    </location>
</feature>
<feature type="domain" description="DRBM" evidence="1">
    <location>
        <begin position="160"/>
        <end position="230"/>
    </location>
</feature>
<feature type="active site" evidence="1">
    <location>
        <position position="51"/>
    </location>
</feature>
<feature type="active site" evidence="1">
    <location>
        <position position="123"/>
    </location>
</feature>
<feature type="binding site" evidence="1">
    <location>
        <position position="47"/>
    </location>
    <ligand>
        <name>Mg(2+)</name>
        <dbReference type="ChEBI" id="CHEBI:18420"/>
    </ligand>
</feature>
<feature type="binding site" evidence="1">
    <location>
        <position position="120"/>
    </location>
    <ligand>
        <name>Mg(2+)</name>
        <dbReference type="ChEBI" id="CHEBI:18420"/>
    </ligand>
</feature>
<feature type="binding site" evidence="1">
    <location>
        <position position="123"/>
    </location>
    <ligand>
        <name>Mg(2+)</name>
        <dbReference type="ChEBI" id="CHEBI:18420"/>
    </ligand>
</feature>
<accession>Q04GL2</accession>
<evidence type="ECO:0000255" key="1">
    <source>
        <dbReference type="HAMAP-Rule" id="MF_00104"/>
    </source>
</evidence>
<protein>
    <recommendedName>
        <fullName evidence="1">Ribonuclease 3</fullName>
        <ecNumber evidence="1">3.1.26.3</ecNumber>
    </recommendedName>
    <alternativeName>
        <fullName evidence="1">Ribonuclease III</fullName>
        <shortName evidence="1">RNase III</shortName>
    </alternativeName>
</protein>
<organism>
    <name type="scientific">Oenococcus oeni (strain ATCC BAA-331 / PSU-1)</name>
    <dbReference type="NCBI Taxonomy" id="203123"/>
    <lineage>
        <taxon>Bacteria</taxon>
        <taxon>Bacillati</taxon>
        <taxon>Bacillota</taxon>
        <taxon>Bacilli</taxon>
        <taxon>Lactobacillales</taxon>
        <taxon>Lactobacillaceae</taxon>
        <taxon>Oenococcus</taxon>
    </lineage>
</organism>